<reference key="1">
    <citation type="journal article" date="2005" name="Nature">
        <title>The genome sequence of the rice blast fungus Magnaporthe grisea.</title>
        <authorList>
            <person name="Dean R.A."/>
            <person name="Talbot N.J."/>
            <person name="Ebbole D.J."/>
            <person name="Farman M.L."/>
            <person name="Mitchell T.K."/>
            <person name="Orbach M.J."/>
            <person name="Thon M.R."/>
            <person name="Kulkarni R."/>
            <person name="Xu J.-R."/>
            <person name="Pan H."/>
            <person name="Read N.D."/>
            <person name="Lee Y.-H."/>
            <person name="Carbone I."/>
            <person name="Brown D."/>
            <person name="Oh Y.Y."/>
            <person name="Donofrio N."/>
            <person name="Jeong J.S."/>
            <person name="Soanes D.M."/>
            <person name="Djonovic S."/>
            <person name="Kolomiets E."/>
            <person name="Rehmeyer C."/>
            <person name="Li W."/>
            <person name="Harding M."/>
            <person name="Kim S."/>
            <person name="Lebrun M.-H."/>
            <person name="Bohnert H."/>
            <person name="Coughlan S."/>
            <person name="Butler J."/>
            <person name="Calvo S.E."/>
            <person name="Ma L.-J."/>
            <person name="Nicol R."/>
            <person name="Purcell S."/>
            <person name="Nusbaum C."/>
            <person name="Galagan J.E."/>
            <person name="Birren B.W."/>
        </authorList>
    </citation>
    <scope>NUCLEOTIDE SEQUENCE [LARGE SCALE GENOMIC DNA]</scope>
    <source>
        <strain>70-15 / ATCC MYA-4617 / FGSC 8958</strain>
    </source>
</reference>
<organism>
    <name type="scientific">Pyricularia oryzae (strain 70-15 / ATCC MYA-4617 / FGSC 8958)</name>
    <name type="common">Rice blast fungus</name>
    <name type="synonym">Magnaporthe oryzae</name>
    <dbReference type="NCBI Taxonomy" id="242507"/>
    <lineage>
        <taxon>Eukaryota</taxon>
        <taxon>Fungi</taxon>
        <taxon>Dikarya</taxon>
        <taxon>Ascomycota</taxon>
        <taxon>Pezizomycotina</taxon>
        <taxon>Sordariomycetes</taxon>
        <taxon>Sordariomycetidae</taxon>
        <taxon>Magnaporthales</taxon>
        <taxon>Pyriculariaceae</taxon>
        <taxon>Pyricularia</taxon>
    </lineage>
</organism>
<protein>
    <recommendedName>
        <fullName>Translation machinery-associated protein 22</fullName>
    </recommendedName>
</protein>
<keyword id="KW-0963">Cytoplasm</keyword>
<keyword id="KW-1185">Reference proteome</keyword>
<keyword id="KW-0687">Ribonucleoprotein</keyword>
<keyword id="KW-0689">Ribosomal protein</keyword>
<name>DENR_PYRO7</name>
<proteinExistence type="inferred from homology"/>
<comment type="subunit">
    <text evidence="1">Interacts with the 40S ribosomal subunit.</text>
</comment>
<comment type="subcellular location">
    <subcellularLocation>
        <location evidence="1">Cytoplasm</location>
    </subcellularLocation>
</comment>
<comment type="domain">
    <text>The SUI1 domain may be involved in RNA binding.</text>
</comment>
<comment type="similarity">
    <text evidence="3">Belongs to the DENR family.</text>
</comment>
<sequence length="201" mass="22089">MADVEQPEAGPSEPQGREVTYCGVCSLPPEYCEYGGTVKKCQDWLQRNNQEMYDRIWSPEALQAATAALSVEAQQRAEKDAKKKAAKAEAAEAKHADKLKKSVVTVKRIERNKRKYVTSVSGLESFGLELKKVAKDFGKKFATGSSVTKVASGGEEIVVQGDVSDEIKEFIVEKYKDVPEDNIELVDDKKNKKKEAATAAG</sequence>
<accession>A4QVI3</accession>
<accession>G4MS81</accession>
<gene>
    <name type="primary">TMA22</name>
    <name type="ORF">MGG_04504</name>
</gene>
<dbReference type="EMBL" id="CM001231">
    <property type="protein sequence ID" value="EHA58339.1"/>
    <property type="molecule type" value="Genomic_DNA"/>
</dbReference>
<dbReference type="RefSeq" id="XP_003710951.1">
    <property type="nucleotide sequence ID" value="XM_003710903.1"/>
</dbReference>
<dbReference type="SMR" id="A4QVI3"/>
<dbReference type="FunCoup" id="A4QVI3">
    <property type="interactions" value="1197"/>
</dbReference>
<dbReference type="STRING" id="242507.A4QVI3"/>
<dbReference type="EnsemblFungi" id="MGG_04504T0">
    <property type="protein sequence ID" value="MGG_04504T0"/>
    <property type="gene ID" value="MGG_04504"/>
</dbReference>
<dbReference type="GeneID" id="2678169"/>
<dbReference type="KEGG" id="mgr:MGG_04504"/>
<dbReference type="VEuPathDB" id="FungiDB:MGG_04504"/>
<dbReference type="eggNOG" id="KOG3239">
    <property type="taxonomic scope" value="Eukaryota"/>
</dbReference>
<dbReference type="HOGENOM" id="CLU_073511_0_1_1"/>
<dbReference type="InParanoid" id="A4QVI3"/>
<dbReference type="OMA" id="EVFEIDM"/>
<dbReference type="OrthoDB" id="277199at2759"/>
<dbReference type="Proteomes" id="UP000009058">
    <property type="component" value="Chromosome 1"/>
</dbReference>
<dbReference type="GO" id="GO:0005737">
    <property type="term" value="C:cytoplasm"/>
    <property type="evidence" value="ECO:0007669"/>
    <property type="project" value="UniProtKB-SubCell"/>
</dbReference>
<dbReference type="GO" id="GO:1990904">
    <property type="term" value="C:ribonucleoprotein complex"/>
    <property type="evidence" value="ECO:0007669"/>
    <property type="project" value="UniProtKB-KW"/>
</dbReference>
<dbReference type="GO" id="GO:0005840">
    <property type="term" value="C:ribosome"/>
    <property type="evidence" value="ECO:0007669"/>
    <property type="project" value="UniProtKB-KW"/>
</dbReference>
<dbReference type="GO" id="GO:0003729">
    <property type="term" value="F:mRNA binding"/>
    <property type="evidence" value="ECO:0007669"/>
    <property type="project" value="TreeGrafter"/>
</dbReference>
<dbReference type="GO" id="GO:0003743">
    <property type="term" value="F:translation initiation factor activity"/>
    <property type="evidence" value="ECO:0007669"/>
    <property type="project" value="InterPro"/>
</dbReference>
<dbReference type="GO" id="GO:0001731">
    <property type="term" value="P:formation of translation preinitiation complex"/>
    <property type="evidence" value="ECO:0007669"/>
    <property type="project" value="TreeGrafter"/>
</dbReference>
<dbReference type="GO" id="GO:0000184">
    <property type="term" value="P:nuclear-transcribed mRNA catabolic process, nonsense-mediated decay"/>
    <property type="evidence" value="ECO:0007669"/>
    <property type="project" value="EnsemblFungi"/>
</dbReference>
<dbReference type="GO" id="GO:0032790">
    <property type="term" value="P:ribosome disassembly"/>
    <property type="evidence" value="ECO:0007669"/>
    <property type="project" value="EnsemblFungi"/>
</dbReference>
<dbReference type="GO" id="GO:0002188">
    <property type="term" value="P:translation reinitiation"/>
    <property type="evidence" value="ECO:0007669"/>
    <property type="project" value="TreeGrafter"/>
</dbReference>
<dbReference type="CDD" id="cd11607">
    <property type="entry name" value="DENR_C"/>
    <property type="match status" value="1"/>
</dbReference>
<dbReference type="Gene3D" id="3.30.780.10">
    <property type="entry name" value="SUI1-like domain"/>
    <property type="match status" value="1"/>
</dbReference>
<dbReference type="InterPro" id="IPR050318">
    <property type="entry name" value="DENR/SUI1_TIF"/>
</dbReference>
<dbReference type="InterPro" id="IPR046447">
    <property type="entry name" value="DENR_C"/>
</dbReference>
<dbReference type="InterPro" id="IPR005873">
    <property type="entry name" value="DENR_eukaryotes"/>
</dbReference>
<dbReference type="InterPro" id="IPR048517">
    <property type="entry name" value="DENR_N"/>
</dbReference>
<dbReference type="InterPro" id="IPR001950">
    <property type="entry name" value="SUI1"/>
</dbReference>
<dbReference type="InterPro" id="IPR036877">
    <property type="entry name" value="SUI1_dom_sf"/>
</dbReference>
<dbReference type="NCBIfam" id="TIGR01159">
    <property type="entry name" value="DRP1"/>
    <property type="match status" value="1"/>
</dbReference>
<dbReference type="PANTHER" id="PTHR12789:SF0">
    <property type="entry name" value="DENSITY-REGULATED PROTEIN"/>
    <property type="match status" value="1"/>
</dbReference>
<dbReference type="PANTHER" id="PTHR12789">
    <property type="entry name" value="DENSITY-REGULATED PROTEIN HOMOLOG"/>
    <property type="match status" value="1"/>
</dbReference>
<dbReference type="Pfam" id="PF21023">
    <property type="entry name" value="DENR_N"/>
    <property type="match status" value="1"/>
</dbReference>
<dbReference type="Pfam" id="PF01253">
    <property type="entry name" value="SUI1"/>
    <property type="match status" value="1"/>
</dbReference>
<dbReference type="SUPFAM" id="SSF55159">
    <property type="entry name" value="eIF1-like"/>
    <property type="match status" value="1"/>
</dbReference>
<dbReference type="PROSITE" id="PS50296">
    <property type="entry name" value="SUI1"/>
    <property type="match status" value="1"/>
</dbReference>
<evidence type="ECO:0000250" key="1"/>
<evidence type="ECO:0000255" key="2">
    <source>
        <dbReference type="PROSITE-ProRule" id="PRU00200"/>
    </source>
</evidence>
<evidence type="ECO:0000305" key="3"/>
<feature type="chain" id="PRO_0000320445" description="Translation machinery-associated protein 22">
    <location>
        <begin position="1"/>
        <end position="201"/>
    </location>
</feature>
<feature type="domain" description="SUI1" evidence="2">
    <location>
        <begin position="104"/>
        <end position="175"/>
    </location>
</feature>